<gene>
    <name evidence="1" type="primary">secB</name>
    <name type="ordered locus">OTBS_2155</name>
</gene>
<organism>
    <name type="scientific">Orientia tsutsugamushi (strain Boryong)</name>
    <name type="common">Rickettsia tsutsugamushi</name>
    <dbReference type="NCBI Taxonomy" id="357244"/>
    <lineage>
        <taxon>Bacteria</taxon>
        <taxon>Pseudomonadati</taxon>
        <taxon>Pseudomonadota</taxon>
        <taxon>Alphaproteobacteria</taxon>
        <taxon>Rickettsiales</taxon>
        <taxon>Rickettsiaceae</taxon>
        <taxon>Rickettsieae</taxon>
        <taxon>Orientia</taxon>
    </lineage>
</organism>
<keyword id="KW-0143">Chaperone</keyword>
<keyword id="KW-0963">Cytoplasm</keyword>
<keyword id="KW-0653">Protein transport</keyword>
<keyword id="KW-1185">Reference proteome</keyword>
<keyword id="KW-0811">Translocation</keyword>
<keyword id="KW-0813">Transport</keyword>
<feature type="chain" id="PRO_0000318252" description="Protein-export protein SecB">
    <location>
        <begin position="1"/>
        <end position="160"/>
    </location>
</feature>
<protein>
    <recommendedName>
        <fullName evidence="1">Protein-export protein SecB</fullName>
    </recommendedName>
</protein>
<proteinExistence type="inferred from homology"/>
<dbReference type="EMBL" id="AM494475">
    <property type="protein sequence ID" value="CAM81250.1"/>
    <property type="molecule type" value="Genomic_DNA"/>
</dbReference>
<dbReference type="RefSeq" id="WP_011945171.1">
    <property type="nucleotide sequence ID" value="NC_009488.1"/>
</dbReference>
<dbReference type="SMR" id="A5CFN0"/>
<dbReference type="KEGG" id="ots:OTBS_2155"/>
<dbReference type="eggNOG" id="COG1952">
    <property type="taxonomic scope" value="Bacteria"/>
</dbReference>
<dbReference type="HOGENOM" id="CLU_111574_1_0_5"/>
<dbReference type="Proteomes" id="UP000001565">
    <property type="component" value="Chromosome"/>
</dbReference>
<dbReference type="GO" id="GO:0005737">
    <property type="term" value="C:cytoplasm"/>
    <property type="evidence" value="ECO:0007669"/>
    <property type="project" value="UniProtKB-SubCell"/>
</dbReference>
<dbReference type="GO" id="GO:0051082">
    <property type="term" value="F:unfolded protein binding"/>
    <property type="evidence" value="ECO:0007669"/>
    <property type="project" value="InterPro"/>
</dbReference>
<dbReference type="GO" id="GO:0006457">
    <property type="term" value="P:protein folding"/>
    <property type="evidence" value="ECO:0007669"/>
    <property type="project" value="UniProtKB-UniRule"/>
</dbReference>
<dbReference type="GO" id="GO:0051262">
    <property type="term" value="P:protein tetramerization"/>
    <property type="evidence" value="ECO:0007669"/>
    <property type="project" value="InterPro"/>
</dbReference>
<dbReference type="GO" id="GO:0015031">
    <property type="term" value="P:protein transport"/>
    <property type="evidence" value="ECO:0007669"/>
    <property type="project" value="UniProtKB-UniRule"/>
</dbReference>
<dbReference type="Gene3D" id="3.10.420.10">
    <property type="entry name" value="SecB-like"/>
    <property type="match status" value="1"/>
</dbReference>
<dbReference type="HAMAP" id="MF_00821">
    <property type="entry name" value="SecB"/>
    <property type="match status" value="1"/>
</dbReference>
<dbReference type="InterPro" id="IPR003708">
    <property type="entry name" value="SecB"/>
</dbReference>
<dbReference type="InterPro" id="IPR035958">
    <property type="entry name" value="SecB-like_sf"/>
</dbReference>
<dbReference type="NCBIfam" id="NF004392">
    <property type="entry name" value="PRK05751.1-3"/>
    <property type="match status" value="1"/>
</dbReference>
<dbReference type="NCBIfam" id="TIGR00809">
    <property type="entry name" value="secB"/>
    <property type="match status" value="1"/>
</dbReference>
<dbReference type="PANTHER" id="PTHR36918">
    <property type="match status" value="1"/>
</dbReference>
<dbReference type="PANTHER" id="PTHR36918:SF1">
    <property type="entry name" value="PROTEIN-EXPORT PROTEIN SECB"/>
    <property type="match status" value="1"/>
</dbReference>
<dbReference type="Pfam" id="PF02556">
    <property type="entry name" value="SecB"/>
    <property type="match status" value="1"/>
</dbReference>
<dbReference type="PRINTS" id="PR01594">
    <property type="entry name" value="SECBCHAPRONE"/>
</dbReference>
<dbReference type="SUPFAM" id="SSF54611">
    <property type="entry name" value="SecB-like"/>
    <property type="match status" value="1"/>
</dbReference>
<name>SECB_ORITB</name>
<accession>A5CFN0</accession>
<evidence type="ECO:0000255" key="1">
    <source>
        <dbReference type="HAMAP-Rule" id="MF_00821"/>
    </source>
</evidence>
<sequence>MVATSEPKIAVKAQYVKDLSFENPDPINSLFKITEKPKIDTKLDINITKLSEDNHFEVELSTNVSATCNDKKIFHIEVVYAGIFQLTNISEEDKKFILSVRCPEIIFPYVRQIISESTQKGGFLPLMIDYIDFAEIISNTQTTNNPQKSIKPEFDVSNKQ</sequence>
<reference key="1">
    <citation type="journal article" date="2007" name="Proc. Natl. Acad. Sci. U.S.A.">
        <title>The Orientia tsutsugamushi genome reveals massive proliferation of conjugative type IV secretion system and host-cell interaction genes.</title>
        <authorList>
            <person name="Cho N.-H."/>
            <person name="Kim H.-R."/>
            <person name="Lee J.-H."/>
            <person name="Kim S.-Y."/>
            <person name="Kim J."/>
            <person name="Cha S."/>
            <person name="Kim S.-Y."/>
            <person name="Darby A.C."/>
            <person name="Fuxelius H.-H."/>
            <person name="Yin J."/>
            <person name="Kim J.H."/>
            <person name="Kim J."/>
            <person name="Lee S.J."/>
            <person name="Koh Y.-S."/>
            <person name="Jang W.-J."/>
            <person name="Park K.-H."/>
            <person name="Andersson S.G.E."/>
            <person name="Choi M.-S."/>
            <person name="Kim I.-S."/>
        </authorList>
    </citation>
    <scope>NUCLEOTIDE SEQUENCE [LARGE SCALE GENOMIC DNA]</scope>
    <source>
        <strain>Boryong</strain>
    </source>
</reference>
<comment type="function">
    <text evidence="1">One of the proteins required for the normal export of preproteins out of the cell cytoplasm. It is a molecular chaperone that binds to a subset of precursor proteins, maintaining them in a translocation-competent state. It also specifically binds to its receptor SecA.</text>
</comment>
<comment type="subunit">
    <text evidence="1">Homotetramer, a dimer of dimers. One homotetramer interacts with 1 SecA dimer.</text>
</comment>
<comment type="subcellular location">
    <subcellularLocation>
        <location evidence="1">Cytoplasm</location>
    </subcellularLocation>
</comment>
<comment type="similarity">
    <text evidence="1">Belongs to the SecB family.</text>
</comment>